<organism>
    <name type="scientific">Campylobacter jejuni (strain RM1221)</name>
    <dbReference type="NCBI Taxonomy" id="195099"/>
    <lineage>
        <taxon>Bacteria</taxon>
        <taxon>Pseudomonadati</taxon>
        <taxon>Campylobacterota</taxon>
        <taxon>Epsilonproteobacteria</taxon>
        <taxon>Campylobacterales</taxon>
        <taxon>Campylobacteraceae</taxon>
        <taxon>Campylobacter</taxon>
    </lineage>
</organism>
<sequence>MAKEKFSRNKPHVNIGTIGHVDHGKTTLTAAISAVLSRRGLAELKDYDNIDNAPEEKERGITIATSHIEYETDNRHYAHVDCPGHADYVKNMITGAAQMDGAILVVSAADGPMPQTREHILLSRQVGVPYIVVFMNKADMVDDAELLELVEMEIRELLSSYDFPGDDTPIISGSALKALEEAKAGQDGEWSAKIMDLMAAVDSYIPTPTRDTEKDFLMPIEDVFSISGRGTVVTGRIEKGVVKVGDTIEIVGIKDTQTTTVTGVEMFRKEMDQGEAGDNVGVLLRGTKKEEVIRGMVLAKPKSITPHTDFEAEVYILNKDEGGRHTPFFNNYRPQFYVRTTDVTGSIKLADGVEMVMPGENVRITVSLIAPVALEEGTRFAIREGGKTVGSGVVSKIIK</sequence>
<gene>
    <name evidence="2" type="primary">tuf</name>
    <name type="ordered locus">CJE0520</name>
</gene>
<comment type="function">
    <text evidence="2">GTP hydrolase that promotes the GTP-dependent binding of aminoacyl-tRNA to the A-site of ribosomes during protein biosynthesis.</text>
</comment>
<comment type="catalytic activity">
    <reaction evidence="2">
        <text>GTP + H2O = GDP + phosphate + H(+)</text>
        <dbReference type="Rhea" id="RHEA:19669"/>
        <dbReference type="ChEBI" id="CHEBI:15377"/>
        <dbReference type="ChEBI" id="CHEBI:15378"/>
        <dbReference type="ChEBI" id="CHEBI:37565"/>
        <dbReference type="ChEBI" id="CHEBI:43474"/>
        <dbReference type="ChEBI" id="CHEBI:58189"/>
        <dbReference type="EC" id="3.6.5.3"/>
    </reaction>
    <physiologicalReaction direction="left-to-right" evidence="2">
        <dbReference type="Rhea" id="RHEA:19670"/>
    </physiologicalReaction>
</comment>
<comment type="subunit">
    <text evidence="2">Monomer.</text>
</comment>
<comment type="subcellular location">
    <subcellularLocation>
        <location evidence="2">Cytoplasm</location>
    </subcellularLocation>
</comment>
<comment type="similarity">
    <text evidence="2">Belongs to the TRAFAC class translation factor GTPase superfamily. Classic translation factor GTPase family. EF-Tu/EF-1A subfamily.</text>
</comment>
<proteinExistence type="inferred from homology"/>
<keyword id="KW-0963">Cytoplasm</keyword>
<keyword id="KW-0251">Elongation factor</keyword>
<keyword id="KW-0342">GTP-binding</keyword>
<keyword id="KW-0378">Hydrolase</keyword>
<keyword id="KW-0460">Magnesium</keyword>
<keyword id="KW-0479">Metal-binding</keyword>
<keyword id="KW-0547">Nucleotide-binding</keyword>
<keyword id="KW-0648">Protein biosynthesis</keyword>
<feature type="chain" id="PRO_0000091303" description="Elongation factor Tu">
    <location>
        <begin position="1"/>
        <end position="399"/>
    </location>
</feature>
<feature type="domain" description="tr-type G">
    <location>
        <begin position="10"/>
        <end position="209"/>
    </location>
</feature>
<feature type="region of interest" description="G1" evidence="1">
    <location>
        <begin position="19"/>
        <end position="26"/>
    </location>
</feature>
<feature type="region of interest" description="G2" evidence="1">
    <location>
        <begin position="60"/>
        <end position="64"/>
    </location>
</feature>
<feature type="region of interest" description="G3" evidence="1">
    <location>
        <begin position="81"/>
        <end position="84"/>
    </location>
</feature>
<feature type="region of interest" description="G4" evidence="1">
    <location>
        <begin position="136"/>
        <end position="139"/>
    </location>
</feature>
<feature type="region of interest" description="G5" evidence="1">
    <location>
        <begin position="174"/>
        <end position="176"/>
    </location>
</feature>
<feature type="binding site" evidence="2">
    <location>
        <begin position="19"/>
        <end position="26"/>
    </location>
    <ligand>
        <name>GTP</name>
        <dbReference type="ChEBI" id="CHEBI:37565"/>
    </ligand>
</feature>
<feature type="binding site" evidence="2">
    <location>
        <position position="26"/>
    </location>
    <ligand>
        <name>Mg(2+)</name>
        <dbReference type="ChEBI" id="CHEBI:18420"/>
    </ligand>
</feature>
<feature type="binding site" evidence="2">
    <location>
        <begin position="81"/>
        <end position="85"/>
    </location>
    <ligand>
        <name>GTP</name>
        <dbReference type="ChEBI" id="CHEBI:37565"/>
    </ligand>
</feature>
<feature type="binding site" evidence="2">
    <location>
        <begin position="136"/>
        <end position="139"/>
    </location>
    <ligand>
        <name>GTP</name>
        <dbReference type="ChEBI" id="CHEBI:37565"/>
    </ligand>
</feature>
<accession>Q5HVZ7</accession>
<name>EFTU_CAMJR</name>
<dbReference type="EC" id="3.6.5.3" evidence="2"/>
<dbReference type="EMBL" id="CP000025">
    <property type="protein sequence ID" value="AAW35107.1"/>
    <property type="molecule type" value="Genomic_DNA"/>
</dbReference>
<dbReference type="RefSeq" id="WP_002855271.1">
    <property type="nucleotide sequence ID" value="NC_003912.7"/>
</dbReference>
<dbReference type="SMR" id="Q5HVZ7"/>
<dbReference type="KEGG" id="cjr:CJE0520"/>
<dbReference type="HOGENOM" id="CLU_007265_0_1_7"/>
<dbReference type="GO" id="GO:0005829">
    <property type="term" value="C:cytosol"/>
    <property type="evidence" value="ECO:0007669"/>
    <property type="project" value="TreeGrafter"/>
</dbReference>
<dbReference type="GO" id="GO:0005525">
    <property type="term" value="F:GTP binding"/>
    <property type="evidence" value="ECO:0007669"/>
    <property type="project" value="UniProtKB-UniRule"/>
</dbReference>
<dbReference type="GO" id="GO:0003924">
    <property type="term" value="F:GTPase activity"/>
    <property type="evidence" value="ECO:0007669"/>
    <property type="project" value="InterPro"/>
</dbReference>
<dbReference type="GO" id="GO:0003746">
    <property type="term" value="F:translation elongation factor activity"/>
    <property type="evidence" value="ECO:0007669"/>
    <property type="project" value="UniProtKB-UniRule"/>
</dbReference>
<dbReference type="CDD" id="cd01884">
    <property type="entry name" value="EF_Tu"/>
    <property type="match status" value="1"/>
</dbReference>
<dbReference type="CDD" id="cd03697">
    <property type="entry name" value="EFTU_II"/>
    <property type="match status" value="1"/>
</dbReference>
<dbReference type="CDD" id="cd03707">
    <property type="entry name" value="EFTU_III"/>
    <property type="match status" value="1"/>
</dbReference>
<dbReference type="FunFam" id="2.40.30.10:FF:000001">
    <property type="entry name" value="Elongation factor Tu"/>
    <property type="match status" value="1"/>
</dbReference>
<dbReference type="FunFam" id="3.40.50.300:FF:000003">
    <property type="entry name" value="Elongation factor Tu"/>
    <property type="match status" value="1"/>
</dbReference>
<dbReference type="Gene3D" id="3.40.50.300">
    <property type="entry name" value="P-loop containing nucleotide triphosphate hydrolases"/>
    <property type="match status" value="1"/>
</dbReference>
<dbReference type="Gene3D" id="2.40.30.10">
    <property type="entry name" value="Translation factors"/>
    <property type="match status" value="2"/>
</dbReference>
<dbReference type="HAMAP" id="MF_00118_B">
    <property type="entry name" value="EF_Tu_B"/>
    <property type="match status" value="1"/>
</dbReference>
<dbReference type="InterPro" id="IPR041709">
    <property type="entry name" value="EF-Tu_GTP-bd"/>
</dbReference>
<dbReference type="InterPro" id="IPR050055">
    <property type="entry name" value="EF-Tu_GTPase"/>
</dbReference>
<dbReference type="InterPro" id="IPR004161">
    <property type="entry name" value="EFTu-like_2"/>
</dbReference>
<dbReference type="InterPro" id="IPR033720">
    <property type="entry name" value="EFTU_2"/>
</dbReference>
<dbReference type="InterPro" id="IPR031157">
    <property type="entry name" value="G_TR_CS"/>
</dbReference>
<dbReference type="InterPro" id="IPR027417">
    <property type="entry name" value="P-loop_NTPase"/>
</dbReference>
<dbReference type="InterPro" id="IPR005225">
    <property type="entry name" value="Small_GTP-bd"/>
</dbReference>
<dbReference type="InterPro" id="IPR000795">
    <property type="entry name" value="T_Tr_GTP-bd_dom"/>
</dbReference>
<dbReference type="InterPro" id="IPR009000">
    <property type="entry name" value="Transl_B-barrel_sf"/>
</dbReference>
<dbReference type="InterPro" id="IPR009001">
    <property type="entry name" value="Transl_elong_EF1A/Init_IF2_C"/>
</dbReference>
<dbReference type="InterPro" id="IPR004541">
    <property type="entry name" value="Transl_elong_EFTu/EF1A_bac/org"/>
</dbReference>
<dbReference type="InterPro" id="IPR004160">
    <property type="entry name" value="Transl_elong_EFTu/EF1A_C"/>
</dbReference>
<dbReference type="NCBIfam" id="TIGR00485">
    <property type="entry name" value="EF-Tu"/>
    <property type="match status" value="1"/>
</dbReference>
<dbReference type="NCBIfam" id="NF000766">
    <property type="entry name" value="PRK00049.1"/>
    <property type="match status" value="1"/>
</dbReference>
<dbReference type="NCBIfam" id="NF009372">
    <property type="entry name" value="PRK12735.1"/>
    <property type="match status" value="1"/>
</dbReference>
<dbReference type="NCBIfam" id="NF009373">
    <property type="entry name" value="PRK12736.1"/>
    <property type="match status" value="1"/>
</dbReference>
<dbReference type="NCBIfam" id="TIGR00231">
    <property type="entry name" value="small_GTP"/>
    <property type="match status" value="1"/>
</dbReference>
<dbReference type="PANTHER" id="PTHR43721:SF22">
    <property type="entry name" value="ELONGATION FACTOR TU, MITOCHONDRIAL"/>
    <property type="match status" value="1"/>
</dbReference>
<dbReference type="PANTHER" id="PTHR43721">
    <property type="entry name" value="ELONGATION FACTOR TU-RELATED"/>
    <property type="match status" value="1"/>
</dbReference>
<dbReference type="Pfam" id="PF00009">
    <property type="entry name" value="GTP_EFTU"/>
    <property type="match status" value="1"/>
</dbReference>
<dbReference type="Pfam" id="PF03144">
    <property type="entry name" value="GTP_EFTU_D2"/>
    <property type="match status" value="1"/>
</dbReference>
<dbReference type="Pfam" id="PF03143">
    <property type="entry name" value="GTP_EFTU_D3"/>
    <property type="match status" value="1"/>
</dbReference>
<dbReference type="PRINTS" id="PR00315">
    <property type="entry name" value="ELONGATNFCT"/>
</dbReference>
<dbReference type="SUPFAM" id="SSF50465">
    <property type="entry name" value="EF-Tu/eEF-1alpha/eIF2-gamma C-terminal domain"/>
    <property type="match status" value="1"/>
</dbReference>
<dbReference type="SUPFAM" id="SSF52540">
    <property type="entry name" value="P-loop containing nucleoside triphosphate hydrolases"/>
    <property type="match status" value="1"/>
</dbReference>
<dbReference type="SUPFAM" id="SSF50447">
    <property type="entry name" value="Translation proteins"/>
    <property type="match status" value="1"/>
</dbReference>
<dbReference type="PROSITE" id="PS00301">
    <property type="entry name" value="G_TR_1"/>
    <property type="match status" value="1"/>
</dbReference>
<dbReference type="PROSITE" id="PS51722">
    <property type="entry name" value="G_TR_2"/>
    <property type="match status" value="1"/>
</dbReference>
<protein>
    <recommendedName>
        <fullName evidence="2">Elongation factor Tu</fullName>
        <shortName evidence="2">EF-Tu</shortName>
        <ecNumber evidence="2">3.6.5.3</ecNumber>
    </recommendedName>
</protein>
<evidence type="ECO:0000250" key="1"/>
<evidence type="ECO:0000255" key="2">
    <source>
        <dbReference type="HAMAP-Rule" id="MF_00118"/>
    </source>
</evidence>
<reference key="1">
    <citation type="journal article" date="2005" name="PLoS Biol.">
        <title>Major structural differences and novel potential virulence mechanisms from the genomes of multiple Campylobacter species.</title>
        <authorList>
            <person name="Fouts D.E."/>
            <person name="Mongodin E.F."/>
            <person name="Mandrell R.E."/>
            <person name="Miller W.G."/>
            <person name="Rasko D.A."/>
            <person name="Ravel J."/>
            <person name="Brinkac L.M."/>
            <person name="DeBoy R.T."/>
            <person name="Parker C.T."/>
            <person name="Daugherty S.C."/>
            <person name="Dodson R.J."/>
            <person name="Durkin A.S."/>
            <person name="Madupu R."/>
            <person name="Sullivan S.A."/>
            <person name="Shetty J.U."/>
            <person name="Ayodeji M.A."/>
            <person name="Shvartsbeyn A."/>
            <person name="Schatz M.C."/>
            <person name="Badger J.H."/>
            <person name="Fraser C.M."/>
            <person name="Nelson K.E."/>
        </authorList>
    </citation>
    <scope>NUCLEOTIDE SEQUENCE [LARGE SCALE GENOMIC DNA]</scope>
    <source>
        <strain>RM1221</strain>
    </source>
</reference>